<feature type="chain" id="PRO_0000155220" description="Thymidylate kinase">
    <location>
        <begin position="1"/>
        <end position="205"/>
    </location>
</feature>
<feature type="binding site" evidence="2">
    <location>
        <begin position="11"/>
        <end position="18"/>
    </location>
    <ligand>
        <name>ATP</name>
        <dbReference type="ChEBI" id="CHEBI:30616"/>
    </ligand>
</feature>
<organismHost>
    <name type="scientific">Homo sapiens</name>
    <name type="common">Human</name>
    <dbReference type="NCBI Taxonomy" id="9606"/>
</organismHost>
<dbReference type="EC" id="2.7.4.9"/>
<dbReference type="EMBL" id="X69198">
    <property type="protein sequence ID" value="CAA49101.1"/>
    <property type="molecule type" value="Genomic_DNA"/>
</dbReference>
<dbReference type="EMBL" id="X67118">
    <property type="protein sequence ID" value="CAA47543.1"/>
    <property type="molecule type" value="Genomic_DNA"/>
</dbReference>
<dbReference type="PIR" id="A36854">
    <property type="entry name" value="A36854"/>
</dbReference>
<dbReference type="RefSeq" id="NP_042204.1">
    <property type="nucleotide sequence ID" value="NC_001611.1"/>
</dbReference>
<dbReference type="SMR" id="P0DSV5"/>
<dbReference type="GeneID" id="1486448"/>
<dbReference type="KEGG" id="vg:1486448"/>
<dbReference type="UniPathway" id="UPA00575"/>
<dbReference type="Proteomes" id="UP000002060">
    <property type="component" value="Segment"/>
</dbReference>
<dbReference type="GO" id="GO:0005524">
    <property type="term" value="F:ATP binding"/>
    <property type="evidence" value="ECO:0007669"/>
    <property type="project" value="UniProtKB-KW"/>
</dbReference>
<dbReference type="GO" id="GO:0004798">
    <property type="term" value="F:dTMP kinase activity"/>
    <property type="evidence" value="ECO:0007669"/>
    <property type="project" value="UniProtKB-EC"/>
</dbReference>
<dbReference type="GO" id="GO:0004550">
    <property type="term" value="F:nucleoside diphosphate kinase activity"/>
    <property type="evidence" value="ECO:0007669"/>
    <property type="project" value="TreeGrafter"/>
</dbReference>
<dbReference type="GO" id="GO:0006233">
    <property type="term" value="P:dTDP biosynthetic process"/>
    <property type="evidence" value="ECO:0007669"/>
    <property type="project" value="InterPro"/>
</dbReference>
<dbReference type="GO" id="GO:0006235">
    <property type="term" value="P:dTTP biosynthetic process"/>
    <property type="evidence" value="ECO:0007669"/>
    <property type="project" value="UniProtKB-UniPathway"/>
</dbReference>
<dbReference type="GO" id="GO:0006227">
    <property type="term" value="P:dUDP biosynthetic process"/>
    <property type="evidence" value="ECO:0007669"/>
    <property type="project" value="TreeGrafter"/>
</dbReference>
<dbReference type="Gene3D" id="3.40.50.300">
    <property type="entry name" value="P-loop containing nucleotide triphosphate hydrolases"/>
    <property type="match status" value="1"/>
</dbReference>
<dbReference type="InterPro" id="IPR027417">
    <property type="entry name" value="P-loop_NTPase"/>
</dbReference>
<dbReference type="InterPro" id="IPR039430">
    <property type="entry name" value="Thymidylate_kin-like_dom"/>
</dbReference>
<dbReference type="InterPro" id="IPR018094">
    <property type="entry name" value="Thymidylate_kinase"/>
</dbReference>
<dbReference type="NCBIfam" id="TIGR00041">
    <property type="entry name" value="DTMP_kinase"/>
    <property type="match status" value="1"/>
</dbReference>
<dbReference type="PANTHER" id="PTHR10344">
    <property type="entry name" value="THYMIDYLATE KINASE"/>
    <property type="match status" value="1"/>
</dbReference>
<dbReference type="PANTHER" id="PTHR10344:SF1">
    <property type="entry name" value="THYMIDYLATE KINASE"/>
    <property type="match status" value="1"/>
</dbReference>
<dbReference type="Pfam" id="PF02223">
    <property type="entry name" value="Thymidylate_kin"/>
    <property type="match status" value="1"/>
</dbReference>
<dbReference type="SUPFAM" id="SSF52540">
    <property type="entry name" value="P-loop containing nucleoside triphosphate hydrolases"/>
    <property type="match status" value="1"/>
</dbReference>
<dbReference type="PROSITE" id="PS01331">
    <property type="entry name" value="THYMIDYLATE_KINASE"/>
    <property type="match status" value="1"/>
</dbReference>
<comment type="function">
    <text evidence="1">Poxvirus TMP kinase is able to phosphorylate dTMP, dUMP and also dGMP from any purine and pyrimidine nucleoside triphosphate. The large substrate specificity is explained by the presence of a canal connecting the edge of the dimer interface to the TMP base binding pocket, canal not found in the human homolog.</text>
</comment>
<comment type="catalytic activity">
    <reaction evidence="1">
        <text>dTMP + ATP = dTDP + ADP</text>
        <dbReference type="Rhea" id="RHEA:13517"/>
        <dbReference type="ChEBI" id="CHEBI:30616"/>
        <dbReference type="ChEBI" id="CHEBI:58369"/>
        <dbReference type="ChEBI" id="CHEBI:63528"/>
        <dbReference type="ChEBI" id="CHEBI:456216"/>
        <dbReference type="EC" id="2.7.4.9"/>
    </reaction>
</comment>
<comment type="pathway">
    <text evidence="1">Pyrimidine metabolism; dTTP biosynthesis.</text>
</comment>
<comment type="subunit">
    <text evidence="1">Homodimer; the dimer arrangement is orthogonal and not antiparallel as in human enzyme.</text>
</comment>
<comment type="induction">
    <text>Expressed in the early phase of the viral replicative cycle.</text>
</comment>
<comment type="similarity">
    <text evidence="2">Belongs to the thymidylate kinase family.</text>
</comment>
<name>KTHY_VAR67</name>
<evidence type="ECO:0000250" key="1">
    <source>
        <dbReference type="UniProtKB" id="Q80HT9"/>
    </source>
</evidence>
<evidence type="ECO:0000305" key="2"/>
<proteinExistence type="evidence at transcript level"/>
<reference key="1">
    <citation type="journal article" date="1991" name="Dokl. Akad. Nauk SSSR">
        <title>Creation of a clone library of fragments from the natural variola virus and study of the structural and functional organization of viral genes from a circle of hosts.</title>
        <authorList>
            <person name="Shchelkunov S.N."/>
            <person name="Marennikova S.S."/>
            <person name="Totmenin A.V."/>
            <person name="Blinov V.M."/>
            <person name="Chizhikov V.E."/>
            <person name="Gutorov V.V."/>
            <person name="Safronov P.F."/>
            <person name="Pozdnyakov S.G."/>
            <person name="Shelukhina E.M."/>
            <person name="Gashnikov P.V."/>
            <person name="Anjaparidze O.G."/>
            <person name="Sandakhchiev L.S."/>
        </authorList>
    </citation>
    <scope>NUCLEOTIDE SEQUENCE [GENOMIC DNA]</scope>
</reference>
<reference key="2">
    <citation type="journal article" date="1993" name="FEBS Lett.">
        <title>Genes of variola and vaccinia viruses necessary to overcome the host protective mechanisms.</title>
        <authorList>
            <person name="Shchelkunov S.N."/>
            <person name="Blinov V.M."/>
            <person name="Sandakhchiev L.S."/>
        </authorList>
    </citation>
    <scope>NUCLEOTIDE SEQUENCE [GENOMIC DNA]</scope>
</reference>
<protein>
    <recommendedName>
        <fullName>Thymidylate kinase</fullName>
        <ecNumber>2.7.4.9</ecNumber>
    </recommendedName>
    <alternativeName>
        <fullName>dTMP kinase</fullName>
    </alternativeName>
</protein>
<gene>
    <name type="primary">OPG178</name>
    <name type="synonym">TMK</name>
    <name type="ORF">A48R</name>
    <name type="ORF">J2R</name>
</gene>
<accession>P0DSV5</accession>
<accession>P33803</accession>
<keyword id="KW-0067">ATP-binding</keyword>
<keyword id="KW-0244">Early protein</keyword>
<keyword id="KW-0418">Kinase</keyword>
<keyword id="KW-0545">Nucleotide biosynthesis</keyword>
<keyword id="KW-0547">Nucleotide-binding</keyword>
<keyword id="KW-1185">Reference proteome</keyword>
<keyword id="KW-0808">Transferase</keyword>
<sequence length="205" mass="23378">MSRGALIVFEGLDKSGKTTQCMNIMESIPTNTIKYLNFPQRSTVTGKMIDDYLTRKKTYNDHIVNLLFCANRWEFASFIQEQLEQGITLIVDRYAFSGVAYATAKGASMTLSKSYESGLPKPDLVIFLESGSKEINRNVGEEIYEDVAFQQKVLQEYKKMIEEGEDIHWQIISSEFEEDVKKELIKNIVIEAIHTVTGPVGQLWM</sequence>
<organism>
    <name type="scientific">Variola virus (isolate Human/India/Ind3/1967)</name>
    <name type="common">VARV</name>
    <name type="synonym">Smallpox virus</name>
    <dbReference type="NCBI Taxonomy" id="587200"/>
    <lineage>
        <taxon>Viruses</taxon>
        <taxon>Varidnaviria</taxon>
        <taxon>Bamfordvirae</taxon>
        <taxon>Nucleocytoviricota</taxon>
        <taxon>Pokkesviricetes</taxon>
        <taxon>Chitovirales</taxon>
        <taxon>Poxviridae</taxon>
        <taxon>Chordopoxvirinae</taxon>
        <taxon>Orthopoxvirus</taxon>
        <taxon>Variola virus</taxon>
    </lineage>
</organism>